<accession>Q5W7C1</accession>
<accession>A0A0P0WHB4</accession>
<accession>Q9LIX5</accession>
<dbReference type="EMBL" id="AB379845">
    <property type="protein sequence ID" value="BAH28260.1"/>
    <property type="molecule type" value="mRNA"/>
</dbReference>
<dbReference type="EMBL" id="AC078977">
    <property type="protein sequence ID" value="AAV44213.1"/>
    <property type="molecule type" value="Genomic_DNA"/>
</dbReference>
<dbReference type="EMBL" id="AP001111">
    <property type="protein sequence ID" value="BAA90494.1"/>
    <property type="status" value="ALT_SEQ"/>
    <property type="molecule type" value="Genomic_DNA"/>
</dbReference>
<dbReference type="EMBL" id="AP008211">
    <property type="protein sequence ID" value="BAF16393.1"/>
    <property type="molecule type" value="Genomic_DNA"/>
</dbReference>
<dbReference type="EMBL" id="AP014961">
    <property type="protein sequence ID" value="BAS91994.1"/>
    <property type="molecule type" value="Genomic_DNA"/>
</dbReference>
<dbReference type="EMBL" id="AK069359">
    <property type="protein sequence ID" value="BAG91401.1"/>
    <property type="molecule type" value="mRNA"/>
</dbReference>
<dbReference type="RefSeq" id="XP_015637768.1">
    <property type="nucleotide sequence ID" value="XM_015782282.1"/>
</dbReference>
<dbReference type="STRING" id="39947.Q5W7C1"/>
<dbReference type="TCDB" id="3.A.1.139.1">
    <property type="family name" value="the atp-binding cassette (abc) superfamily"/>
</dbReference>
<dbReference type="PaxDb" id="39947-Q5W7C1"/>
<dbReference type="EnsemblPlants" id="Os05t0119000-01">
    <property type="protein sequence ID" value="Os05t0119000-01"/>
    <property type="gene ID" value="Os05g0119000"/>
</dbReference>
<dbReference type="Gramene" id="Os05t0119000-01">
    <property type="protein sequence ID" value="Os05t0119000-01"/>
    <property type="gene ID" value="Os05g0119000"/>
</dbReference>
<dbReference type="KEGG" id="dosa:Os05g0119000"/>
<dbReference type="eggNOG" id="ENOG502RHEJ">
    <property type="taxonomic scope" value="Eukaryota"/>
</dbReference>
<dbReference type="HOGENOM" id="CLU_076147_1_0_1"/>
<dbReference type="InParanoid" id="Q5W7C1"/>
<dbReference type="OMA" id="PWYEPQY"/>
<dbReference type="OrthoDB" id="432685at2759"/>
<dbReference type="PlantReactome" id="R-OSA-9639136">
    <property type="pathway name" value="Response to Aluminum stress"/>
</dbReference>
<dbReference type="Proteomes" id="UP000000763">
    <property type="component" value="Chromosome 5"/>
</dbReference>
<dbReference type="Proteomes" id="UP000059680">
    <property type="component" value="Chromosome 5"/>
</dbReference>
<dbReference type="ExpressionAtlas" id="Q5W7C1">
    <property type="expression patterns" value="baseline and differential"/>
</dbReference>
<dbReference type="GO" id="GO:0005886">
    <property type="term" value="C:plasma membrane"/>
    <property type="evidence" value="ECO:0000318"/>
    <property type="project" value="GO_Central"/>
</dbReference>
<dbReference type="GO" id="GO:0012506">
    <property type="term" value="C:vesicle membrane"/>
    <property type="evidence" value="ECO:0000314"/>
    <property type="project" value="UniProtKB"/>
</dbReference>
<dbReference type="GO" id="GO:0005460">
    <property type="term" value="F:UDP-glucose transmembrane transporter activity"/>
    <property type="evidence" value="ECO:0000314"/>
    <property type="project" value="UniProtKB"/>
</dbReference>
<dbReference type="GO" id="GO:0010044">
    <property type="term" value="P:response to aluminum ion"/>
    <property type="evidence" value="ECO:0000315"/>
    <property type="project" value="UniProtKB"/>
</dbReference>
<dbReference type="GO" id="GO:0015786">
    <property type="term" value="P:UDP-glucose transmembrane transport"/>
    <property type="evidence" value="ECO:0000314"/>
    <property type="project" value="UniProtKB"/>
</dbReference>
<dbReference type="InterPro" id="IPR005226">
    <property type="entry name" value="UPF0014_fam"/>
</dbReference>
<dbReference type="PANTHER" id="PTHR30028:SF0">
    <property type="entry name" value="PROTEIN ALUMINUM SENSITIVE 3"/>
    <property type="match status" value="1"/>
</dbReference>
<dbReference type="PANTHER" id="PTHR30028">
    <property type="entry name" value="UPF0014 INNER MEMBRANE PROTEIN YBBM-RELATED"/>
    <property type="match status" value="1"/>
</dbReference>
<dbReference type="Pfam" id="PF03649">
    <property type="entry name" value="UPF0014"/>
    <property type="match status" value="1"/>
</dbReference>
<protein>
    <recommendedName>
        <fullName evidence="5">UPF0014 membrane protein STAR2</fullName>
    </recommendedName>
    <alternativeName>
        <fullName evidence="4">Protein SENSITIVE TO ALUMINUM RHIZOTOXICITY 2</fullName>
    </alternativeName>
</protein>
<comment type="function">
    <text evidence="2">Associates with STAR2 to form a functional transmembrane ABC transporter required for detoxification of aluminum (Al) in roots. Can specifically transport UDP-glucose.</text>
</comment>
<comment type="subunit">
    <text evidence="2">Interacts with STAR2.</text>
</comment>
<comment type="subcellular location">
    <subcellularLocation>
        <location evidence="2">Membrane</location>
        <topology evidence="2">Multi-pass membrane protein</topology>
    </subcellularLocation>
</comment>
<comment type="tissue specificity">
    <text evidence="2">Expressed in roots.</text>
</comment>
<comment type="induction">
    <text evidence="2 3">By Al in roots. Positively regulated by ART1.</text>
</comment>
<comment type="disruption phenotype">
    <text evidence="2">No visible phenotype under normal growth condition, but strong inhibition of root elongation when grown in the presence of Al.</text>
</comment>
<comment type="similarity">
    <text evidence="5">Belongs to the UPF0014 family.</text>
</comment>
<comment type="sequence caution" evidence="5">
    <conflict type="erroneous gene model prediction">
        <sequence resource="EMBL-CDS" id="BAA90494"/>
    </conflict>
</comment>
<sequence length="285" mass="30311">MMASMAALLQRLLVVVNQVDPGAPGFWREFLVGMLKPVAATAVVAMAVALSFTQRLGLEGEMLYAMARAFLQLSVIGFVLQFIFTQKSAAWILLAYLFMVTVAGYTAGQRARHVPRGKHIAAVSILAGTSVTMALLVALRVFPFTPRYIIPVAGMMVGNAMTVTGVTMKKLREDVGMQRGVVETALALGATPRQATARQVRRSLVIALSPVIDNAKTVGLIALPGAMTGLIMGGASPLEAIQLQIVVMNMLMGASTVSSILSTYLCWPAFFTGAFQLNDAVFAAD</sequence>
<evidence type="ECO:0000255" key="1"/>
<evidence type="ECO:0000269" key="2">
    <source>
    </source>
</evidence>
<evidence type="ECO:0000269" key="3">
    <source>
    </source>
</evidence>
<evidence type="ECO:0000303" key="4">
    <source>
    </source>
</evidence>
<evidence type="ECO:0000305" key="5"/>
<evidence type="ECO:0000312" key="6">
    <source>
        <dbReference type="EMBL" id="AAV44213.1"/>
    </source>
</evidence>
<evidence type="ECO:0000312" key="7">
    <source>
        <dbReference type="EMBL" id="BAF16393.1"/>
    </source>
</evidence>
<gene>
    <name evidence="4" type="primary">STAR2</name>
    <name evidence="7" type="ordered locus">Os05g0119000</name>
    <name evidence="5" type="ordered locus">LOC_Os05g02750</name>
    <name evidence="6" type="ORF">P0496H07.22</name>
</gene>
<feature type="chain" id="PRO_0000405577" description="UPF0014 membrane protein STAR2">
    <location>
        <begin position="1"/>
        <end position="285"/>
    </location>
</feature>
<feature type="transmembrane region" description="Helical" evidence="1">
    <location>
        <begin position="30"/>
        <end position="50"/>
    </location>
</feature>
<feature type="transmembrane region" description="Helical" evidence="1">
    <location>
        <begin position="64"/>
        <end position="84"/>
    </location>
</feature>
<feature type="transmembrane region" description="Helical" evidence="1">
    <location>
        <begin position="88"/>
        <end position="108"/>
    </location>
</feature>
<feature type="transmembrane region" description="Helical" evidence="1">
    <location>
        <begin position="119"/>
        <end position="139"/>
    </location>
</feature>
<feature type="transmembrane region" description="Helical" evidence="1">
    <location>
        <begin position="148"/>
        <end position="168"/>
    </location>
</feature>
<feature type="transmembrane region" description="Helical" evidence="1">
    <location>
        <begin position="203"/>
        <end position="225"/>
    </location>
</feature>
<feature type="transmembrane region" description="Helical" evidence="1">
    <location>
        <begin position="240"/>
        <end position="262"/>
    </location>
</feature>
<organism>
    <name type="scientific">Oryza sativa subsp. japonica</name>
    <name type="common">Rice</name>
    <dbReference type="NCBI Taxonomy" id="39947"/>
    <lineage>
        <taxon>Eukaryota</taxon>
        <taxon>Viridiplantae</taxon>
        <taxon>Streptophyta</taxon>
        <taxon>Embryophyta</taxon>
        <taxon>Tracheophyta</taxon>
        <taxon>Spermatophyta</taxon>
        <taxon>Magnoliopsida</taxon>
        <taxon>Liliopsida</taxon>
        <taxon>Poales</taxon>
        <taxon>Poaceae</taxon>
        <taxon>BOP clade</taxon>
        <taxon>Oryzoideae</taxon>
        <taxon>Oryzeae</taxon>
        <taxon>Oryzinae</taxon>
        <taxon>Oryza</taxon>
        <taxon>Oryza sativa</taxon>
    </lineage>
</organism>
<keyword id="KW-0472">Membrane</keyword>
<keyword id="KW-1185">Reference proteome</keyword>
<keyword id="KW-0812">Transmembrane</keyword>
<keyword id="KW-1133">Transmembrane helix</keyword>
<name>STAR2_ORYSJ</name>
<proteinExistence type="evidence at protein level"/>
<reference key="1">
    <citation type="journal article" date="2009" name="Plant Cell">
        <title>A bacterial-type ABC transporter is involved in aluminum tolerance in rice.</title>
        <authorList>
            <person name="Huang C.F."/>
            <person name="Yamaji N."/>
            <person name="Mitani N."/>
            <person name="Yano M."/>
            <person name="Nagamura Y."/>
            <person name="Ma J.F."/>
        </authorList>
    </citation>
    <scope>NUCLEOTIDE SEQUENCE [MRNA]</scope>
    <scope>FUNCTION</scope>
    <scope>INTERACTION WITH STAR2</scope>
    <scope>SUBCELLULAR LOCATION</scope>
    <scope>TISSUE SPECIFICITY</scope>
    <scope>INDUCTION BY ALUMINUM</scope>
    <scope>DISRUPTION PHENOTYPE</scope>
    <source>
        <strain>cv. Nipponbare</strain>
    </source>
</reference>
<reference key="2">
    <citation type="journal article" date="2005" name="Mol. Genet. Genomics">
        <title>A fine physical map of the rice chromosome 5.</title>
        <authorList>
            <person name="Cheng C.-H."/>
            <person name="Chung M.C."/>
            <person name="Liu S.-M."/>
            <person name="Chen S.-K."/>
            <person name="Kao F.Y."/>
            <person name="Lin S.-J."/>
            <person name="Hsiao S.-H."/>
            <person name="Tseng I.C."/>
            <person name="Hsing Y.-I.C."/>
            <person name="Wu H.-P."/>
            <person name="Chen C.-S."/>
            <person name="Shaw J.-F."/>
            <person name="Wu J."/>
            <person name="Matsumoto T."/>
            <person name="Sasaki T."/>
            <person name="Chen H.-C."/>
            <person name="Chow T.-Y."/>
        </authorList>
    </citation>
    <scope>NUCLEOTIDE SEQUENCE [LARGE SCALE GENOMIC DNA]</scope>
    <source>
        <strain>cv. Nipponbare</strain>
    </source>
</reference>
<reference key="3">
    <citation type="journal article" date="2005" name="Nature">
        <title>The map-based sequence of the rice genome.</title>
        <authorList>
            <consortium name="International rice genome sequencing project (IRGSP)"/>
        </authorList>
    </citation>
    <scope>NUCLEOTIDE SEQUENCE [LARGE SCALE GENOMIC DNA]</scope>
    <source>
        <strain>cv. Nipponbare</strain>
    </source>
</reference>
<reference key="4">
    <citation type="journal article" date="2008" name="Nucleic Acids Res.">
        <title>The rice annotation project database (RAP-DB): 2008 update.</title>
        <authorList>
            <consortium name="The rice annotation project (RAP)"/>
        </authorList>
    </citation>
    <scope>GENOME REANNOTATION</scope>
    <source>
        <strain>cv. Nipponbare</strain>
    </source>
</reference>
<reference key="5">
    <citation type="journal article" date="2013" name="Rice">
        <title>Improvement of the Oryza sativa Nipponbare reference genome using next generation sequence and optical map data.</title>
        <authorList>
            <person name="Kawahara Y."/>
            <person name="de la Bastide M."/>
            <person name="Hamilton J.P."/>
            <person name="Kanamori H."/>
            <person name="McCombie W.R."/>
            <person name="Ouyang S."/>
            <person name="Schwartz D.C."/>
            <person name="Tanaka T."/>
            <person name="Wu J."/>
            <person name="Zhou S."/>
            <person name="Childs K.L."/>
            <person name="Davidson R.M."/>
            <person name="Lin H."/>
            <person name="Quesada-Ocampo L."/>
            <person name="Vaillancourt B."/>
            <person name="Sakai H."/>
            <person name="Lee S.S."/>
            <person name="Kim J."/>
            <person name="Numa H."/>
            <person name="Itoh T."/>
            <person name="Buell C.R."/>
            <person name="Matsumoto T."/>
        </authorList>
    </citation>
    <scope>GENOME REANNOTATION</scope>
    <source>
        <strain>cv. Nipponbare</strain>
    </source>
</reference>
<reference key="6">
    <citation type="journal article" date="2003" name="Science">
        <title>Collection, mapping, and annotation of over 28,000 cDNA clones from japonica rice.</title>
        <authorList>
            <consortium name="The rice full-length cDNA consortium"/>
        </authorList>
    </citation>
    <scope>NUCLEOTIDE SEQUENCE [LARGE SCALE MRNA]</scope>
    <source>
        <strain>cv. Nipponbare</strain>
    </source>
</reference>
<reference key="7">
    <citation type="journal article" date="2009" name="Plant Cell">
        <title>A zinc finger transcription factor ART1 regulates multiple genes implicated in aluminum tolerance in rice.</title>
        <authorList>
            <person name="Yamaji N."/>
            <person name="Huang C.F."/>
            <person name="Nagao S."/>
            <person name="Yano M."/>
            <person name="Sato Y."/>
            <person name="Nagamura Y."/>
            <person name="Ma J.F."/>
        </authorList>
    </citation>
    <scope>INDUCTION BY ALUMINUM</scope>
</reference>